<name>CTBP_ARATH</name>
<feature type="chain" id="PRO_0000408478" description="C-terminal binding protein AN">
    <location>
        <begin position="1"/>
        <end position="636"/>
    </location>
</feature>
<feature type="region of interest" description="Disordered" evidence="4">
    <location>
        <begin position="1"/>
        <end position="21"/>
    </location>
</feature>
<feature type="region of interest" description="Disordered" evidence="4">
    <location>
        <begin position="341"/>
        <end position="489"/>
    </location>
</feature>
<feature type="compositionally biased region" description="Acidic residues" evidence="4">
    <location>
        <begin position="342"/>
        <end position="357"/>
    </location>
</feature>
<feature type="compositionally biased region" description="Polar residues" evidence="4">
    <location>
        <begin position="369"/>
        <end position="384"/>
    </location>
</feature>
<feature type="compositionally biased region" description="Basic and acidic residues" evidence="4">
    <location>
        <begin position="385"/>
        <end position="395"/>
    </location>
</feature>
<feature type="compositionally biased region" description="Polar residues" evidence="4">
    <location>
        <begin position="398"/>
        <end position="409"/>
    </location>
</feature>
<feature type="compositionally biased region" description="Basic residues" evidence="4">
    <location>
        <begin position="417"/>
        <end position="429"/>
    </location>
</feature>
<feature type="compositionally biased region" description="Polar residues" evidence="4">
    <location>
        <begin position="430"/>
        <end position="445"/>
    </location>
</feature>
<feature type="compositionally biased region" description="Basic and acidic residues" evidence="4">
    <location>
        <begin position="470"/>
        <end position="480"/>
    </location>
</feature>
<feature type="binding site" evidence="1">
    <location>
        <position position="91"/>
    </location>
    <ligand>
        <name>NAD(+)</name>
        <dbReference type="ChEBI" id="CHEBI:57540"/>
    </ligand>
</feature>
<feature type="binding site" evidence="3">
    <location>
        <begin position="147"/>
        <end position="148"/>
    </location>
    <ligand>
        <name>NAD(+)</name>
        <dbReference type="ChEBI" id="CHEBI:57540"/>
    </ligand>
</feature>
<feature type="binding site" evidence="2">
    <location>
        <begin position="169"/>
        <end position="174"/>
    </location>
    <ligand>
        <name>NAD(+)</name>
        <dbReference type="ChEBI" id="CHEBI:57540"/>
    </ligand>
</feature>
<feature type="binding site" evidence="2">
    <location>
        <position position="193"/>
    </location>
    <ligand>
        <name>NAD(+)</name>
        <dbReference type="ChEBI" id="CHEBI:57540"/>
    </ligand>
</feature>
<feature type="binding site" evidence="2">
    <location>
        <begin position="231"/>
        <end position="237"/>
    </location>
    <ligand>
        <name>NAD(+)</name>
        <dbReference type="ChEBI" id="CHEBI:57540"/>
    </ligand>
</feature>
<feature type="binding site" evidence="2">
    <location>
        <begin position="258"/>
        <end position="260"/>
    </location>
    <ligand>
        <name>NAD(+)</name>
        <dbReference type="ChEBI" id="CHEBI:57540"/>
    </ligand>
</feature>
<feature type="binding site" evidence="2">
    <location>
        <position position="284"/>
    </location>
    <ligand>
        <name>NAD(+)</name>
        <dbReference type="ChEBI" id="CHEBI:57540"/>
    </ligand>
</feature>
<feature type="binding site" evidence="3">
    <location>
        <begin position="307"/>
        <end position="311"/>
    </location>
    <ligand>
        <name>NAD(+)</name>
        <dbReference type="ChEBI" id="CHEBI:57540"/>
    </ligand>
</feature>
<feature type="mutagenesis site" description="No effect on activity." evidence="11">
    <original>LNCIE</original>
    <variation>RNRIG</variation>
    <location>
        <begin position="26"/>
        <end position="30"/>
    </location>
</feature>
<feature type="mutagenesis site" description="In am-EM2; decreased trichome branching and modified microtubule density along the basal-apical axis of the trichome." evidence="7">
    <original>E</original>
    <variation>K</variation>
    <location>
        <position position="118"/>
    </location>
</feature>
<feature type="mutagenesis site" description="In doq-1; premature opening of flowers and twisted petals." evidence="12">
    <original>G</original>
    <variation>D</variation>
    <location>
        <position position="170"/>
    </location>
</feature>
<feature type="mutagenesis site" description="No effect on activity." evidence="11">
    <original>KKRH</original>
    <variation>AAAA</variation>
    <location>
        <begin position="424"/>
        <end position="427"/>
    </location>
</feature>
<feature type="mutagenesis site" description="No effect on activity." evidence="11">
    <original>S</original>
    <variation>A</variation>
    <location>
        <position position="456"/>
    </location>
</feature>
<feature type="sequence conflict" description="In Ref. 1; BAB64262 and 2; CAA71175." evidence="20" ref="1 2">
    <original>M</original>
    <variation>I</variation>
    <location>
        <position position="299"/>
    </location>
</feature>
<feature type="sequence conflict" description="In Ref. 5; AAL24311/AAN15474." evidence="20" ref="5">
    <original>S</original>
    <variation>L</variation>
    <location>
        <position position="428"/>
    </location>
</feature>
<feature type="sequence conflict" description="In Ref. 5; AAL24311/AAN15474." evidence="20" ref="5">
    <original>V</original>
    <variation>L</variation>
    <location>
        <position position="543"/>
    </location>
</feature>
<keyword id="KW-0133">Cell shape</keyword>
<keyword id="KW-0963">Cytoplasm</keyword>
<keyword id="KW-0206">Cytoskeleton</keyword>
<keyword id="KW-0217">Developmental protein</keyword>
<keyword id="KW-0333">Golgi apparatus</keyword>
<keyword id="KW-0493">Microtubule</keyword>
<keyword id="KW-0520">NAD</keyword>
<keyword id="KW-1185">Reference proteome</keyword>
<keyword id="KW-0346">Stress response</keyword>
<gene>
    <name evidence="18" type="primary">AN</name>
    <name evidence="19" type="synonym">DOQ</name>
    <name evidence="22" type="ordered locus">At1g01510</name>
    <name evidence="23" type="ORF">F22L4.6</name>
</gene>
<evidence type="ECO:0000250" key="1"/>
<evidence type="ECO:0000250" key="2">
    <source>
        <dbReference type="UniProtKB" id="P26297"/>
    </source>
</evidence>
<evidence type="ECO:0000250" key="3">
    <source>
        <dbReference type="UniProtKB" id="Q9I3W9"/>
    </source>
</evidence>
<evidence type="ECO:0000256" key="4">
    <source>
        <dbReference type="SAM" id="MobiDB-lite"/>
    </source>
</evidence>
<evidence type="ECO:0000269" key="5">
    <source>
    </source>
</evidence>
<evidence type="ECO:0000269" key="6">
    <source>
    </source>
</evidence>
<evidence type="ECO:0000269" key="7">
    <source>
    </source>
</evidence>
<evidence type="ECO:0000269" key="8">
    <source>
    </source>
</evidence>
<evidence type="ECO:0000269" key="9">
    <source>
    </source>
</evidence>
<evidence type="ECO:0000269" key="10">
    <source>
    </source>
</evidence>
<evidence type="ECO:0000269" key="11">
    <source>
    </source>
</evidence>
<evidence type="ECO:0000269" key="12">
    <source>
    </source>
</evidence>
<evidence type="ECO:0000269" key="13">
    <source>
    </source>
</evidence>
<evidence type="ECO:0000269" key="14">
    <source>
    </source>
</evidence>
<evidence type="ECO:0000269" key="15">
    <source>
    </source>
</evidence>
<evidence type="ECO:0000269" key="16">
    <source>
    </source>
</evidence>
<evidence type="ECO:0000269" key="17">
    <source>
    </source>
</evidence>
<evidence type="ECO:0000303" key="18">
    <source>
    </source>
</evidence>
<evidence type="ECO:0000303" key="19">
    <source>
    </source>
</evidence>
<evidence type="ECO:0000305" key="20"/>
<evidence type="ECO:0000305" key="21">
    <source>
    </source>
</evidence>
<evidence type="ECO:0000312" key="22">
    <source>
        <dbReference type="Araport" id="AT1G01510"/>
    </source>
</evidence>
<evidence type="ECO:0000312" key="23">
    <source>
        <dbReference type="EMBL" id="AAF81310.1"/>
    </source>
</evidence>
<organism>
    <name type="scientific">Arabidopsis thaliana</name>
    <name type="common">Mouse-ear cress</name>
    <dbReference type="NCBI Taxonomy" id="3702"/>
    <lineage>
        <taxon>Eukaryota</taxon>
        <taxon>Viridiplantae</taxon>
        <taxon>Streptophyta</taxon>
        <taxon>Embryophyta</taxon>
        <taxon>Tracheophyta</taxon>
        <taxon>Spermatophyta</taxon>
        <taxon>Magnoliopsida</taxon>
        <taxon>eudicotyledons</taxon>
        <taxon>Gunneridae</taxon>
        <taxon>Pentapetalae</taxon>
        <taxon>rosids</taxon>
        <taxon>malvids</taxon>
        <taxon>Brassicales</taxon>
        <taxon>Brassicaceae</taxon>
        <taxon>Camelineae</taxon>
        <taxon>Arabidopsis</taxon>
    </lineage>
</organism>
<comment type="function">
    <text evidence="1 5 6 8 9 10 12 13 15 16 17">Involved in controlling the equilibrium between tubular and stacked structures in the Golgi complex (By similarity). Required for cortical microtubules (MTs) arrangement that confers cell shape. Cooperatively with IPGA1, negatively regulates cortical microtubules (CMTs) organization in response to mechanical stress and modulates pavement cells morphogenesis leading to puzzle shape, probably in an AAA1/KTN1-dependent manner (PubMed:35975703). Regulates the width of leaves by controlling the polar elongation of leaf cells. Involved in the regulation of trichome branching. Seems to not be able to regulate gene transcription. Regulates epidermal cell divisions and elongation in a non-cell-autonomous manner (regulated by subepidermal cells), but regulates epidermal cell polarity, shape, trichome branching and elongation in a cell-autonomous manner. Negatively regulates growth in the petiole elongation. Prevents lipid peroxidation as a result of abiotic stress response. Is involved in the SUB-dependent signaling mechanism and may act in a membrane trafficking event around the trans-Golgi network.</text>
</comment>
<comment type="cofactor">
    <cofactor evidence="1">
        <name>NAD(+)</name>
        <dbReference type="ChEBI" id="CHEBI:57540"/>
    </cofactor>
    <text evidence="1">Cofactor binding induces a conformational change.</text>
</comment>
<comment type="subunit">
    <text evidence="7 11 12 14 15">Homodimer (PubMed:21801251). Interacts with KCBP and SUB (via intra-cellular domain); AN is not required for the correct subcellular localization and recycling of SUB (PubMed:11889034, PubMed:23368817). Binds to SOKs proteins polymers (e.g. SOK1, SOK2, SOK3 and SOK4) (PubMed:32004461). Interacts with IPGA1 on microtubule upon mechanical stress to regulate microtubule organization (PubMed:35975703).</text>
</comment>
<comment type="interaction">
    <interactant intactId="EBI-1578856">
        <id>O23702</id>
    </interactant>
    <interactant intactId="EBI-1578856">
        <id>O23702</id>
        <label>AN</label>
    </interactant>
    <organismsDiffer>false</organismsDiffer>
    <experiments>3</experiments>
</comment>
<comment type="subcellular location">
    <subcellularLocation>
        <location evidence="6 7 14">Cytoplasm</location>
    </subcellularLocation>
    <subcellularLocation>
        <location evidence="11">Golgi apparatus</location>
        <location evidence="11">trans-Golgi network</location>
    </subcellularLocation>
    <subcellularLocation>
        <location evidence="15">Cytoplasm</location>
        <location evidence="15">Cytoskeleton</location>
    </subcellularLocation>
    <text evidence="6 7 14">Was thought initially to be located in nucleus (PubMed:11889033, PubMed:11889034) but the large dot-like structures are now believed to represent non-physiological aggregates (PubMed:11889033, PubMed:11889034). In root cells, cytoplasmic polarized localization near cell edges, at the vicinity of SOKs proteins (PubMed:32004461). Associates with membranes in puncta in embryos (PubMed:32004461).</text>
</comment>
<comment type="tissue specificity">
    <text evidence="6 7 11">Expressed in cotyledons, leaves, roots, stems and floral buds.</text>
</comment>
<comment type="domain">
    <text evidence="11">The C-terminal region (631-636) is indispenasble for homodimerization.</text>
</comment>
<comment type="disruption phenotype">
    <text evidence="5 6 8 10 12 13 14 15 16 17">Dwarfism. Impaired cortical microtubules (MTs) arrangement leading to abnormal cell shapes (reduced complexity), and narrow but thick leaves, characterized by cells small in the leaf-width direction and large in the leaf-thickness direction; this phenotype is also slightly observed in floral organs. Reduced trichome branching. Twisted siliques and reduced seed productivity. Delayed flowering and senescence, but increased tolerance to drought and pathogen attack. No impact on polarized localization of SOKs proteins in root cells (PubMed:32004461). The an-t1 ipga1-2 double mutant exhibits stronger phenotypes than single mutants in term of longer and narrower cotyledons and leaves (PubMed:35975703). The an-t1 ktn1-4 double mutant has an enhanced phenotype of pavement cells, resembling soap bubbles and no lobe formation (PubMed:35975703).</text>
</comment>
<comment type="similarity">
    <text evidence="20">Belongs to the D-isomer specific 2-hydroxyacid dehydrogenase family. Plant AN subfamily.</text>
</comment>
<comment type="caution">
    <text evidence="21">Was initially thought to function as a transcriptional corepressor.</text>
</comment>
<comment type="sequence caution" evidence="20">
    <conflict type="erroneous gene model prediction">
        <sequence resource="EMBL-CDS" id="AAF81310"/>
    </conflict>
    <text>The predicted gene At1g01510 has been split into 3 genes: At1g01500, At1g01510 and At1g01520.</text>
</comment>
<comment type="sequence caution" evidence="20">
    <conflict type="erroneous initiation">
        <sequence resource="EMBL-CDS" id="CAA71175"/>
    </conflict>
    <text>Extended N-terminus.</text>
</comment>
<comment type="sequence caution" evidence="20">
    <conflict type="erroneous initiation">
        <sequence resource="EMBL-CDS" id="CAA73307"/>
    </conflict>
    <text>Truncated N-terminus.</text>
</comment>
<protein>
    <recommendedName>
        <fullName evidence="18">C-terminal binding protein AN</fullName>
        <shortName evidence="18">CtBP</shortName>
    </recommendedName>
    <alternativeName>
        <fullName evidence="18">Protein ANGUSTIFOLIA</fullName>
    </alternativeName>
    <alternativeName>
        <fullName evidence="19">Protein DETORQUEO</fullName>
    </alternativeName>
</protein>
<proteinExistence type="evidence at protein level"/>
<accession>O23702</accession>
<accession>O03984</accession>
<accession>Q7DLS3</accession>
<accession>Q93YQ6</accession>
<accession>Q948X7</accession>
<accession>Q9LMM9</accession>
<sequence>MSKIRSSATMPHRDQPSPASPHVVTLNCIEDCALEQDSLAGVAGVEYVPLSRIADGKIESATAVLLHSLAYLPRAAQRRLRPHQLILCLGSADRAVDSTLAADLGLRLVHVDTSRAEEIADTVMALILGLLRRTHLLSRHALSASGWLGSLQPLCRGMRRCRGMVLGIVGRSVSARYLASRSLAFKMSVLYFDVPEGDEERIRPSRFPRAARRMDTLNDLLAASDVISLHCALTNDTVQILNAECLQHIKPGAFLVNTGSCQLLDDCAVKQLLIDGTIAGCALDGAEGPQWMEAWVKEMPNVLILPRSADYSEEVWMEIREKAISILHSFFLDGVIPSNTVSDEEVEESEASEEEEQSPSKHEKLAIVESTSRQQGESTLTSTEIVRREASELKESLSPGQQHVSQNTAVKPEGRRSRSGKKAKKRHSQQKYMQKTDGSSGLNEESTSRRDDIAMSDTEEVLSSSSRCASPEDSRSRKTPLEVMQESSPNQLVMSSKKFIGKSSELLKDGYVVALYAKDLSGLHVSRQRTKNGGWFLDTLSNVSKRDPAAQFIIAYRNKDTVGLRSFAAGGKLLQINRRMEFVFASHSFDVWESWSLEGSLDECRLVNCRNSSAVLDVRVEILAMVGDDGITRWID</sequence>
<reference key="1">
    <citation type="journal article" date="2002" name="EMBO J.">
        <title>The ANGUSTIFOLIA gene of Arabidopsis, a plant CtBP gene, regulates leaf-cell expansion, the arrangement of cortical microtubules in leaf cells and expression of a gene involved in cell-wall formation.</title>
        <authorList>
            <person name="Kim G.-T."/>
            <person name="Shoda K."/>
            <person name="Tsuge T."/>
            <person name="Cho K.-H."/>
            <person name="Uchimiya H."/>
            <person name="Yokoyama R."/>
            <person name="Nishitani K."/>
            <person name="Tsukaya H."/>
        </authorList>
    </citation>
    <scope>NUCLEOTIDE SEQUENCE [MRNA]</scope>
    <scope>FUNCTION</scope>
    <scope>DISRUPTION PHENOTYPE</scope>
    <scope>HOMODIMERIZATION</scope>
    <scope>TISSUE SPECIFICITY</scope>
    <scope>SUBCELLULAR LOCATION</scope>
    <source>
        <strain>cv. Columbia</strain>
    </source>
</reference>
<reference key="2">
    <citation type="journal article" date="1998" name="Gene">
        <title>Sequence analysis of a 40-kb Arabidopsis thaliana genomic region located at the top of chromosome 1.</title>
        <authorList>
            <person name="Terryn N."/>
            <person name="Gielen J."/>
            <person name="De Keyser A."/>
            <person name="Van Den Daele H."/>
            <person name="Ardiles W."/>
            <person name="Neyt P."/>
            <person name="De Clercq R."/>
            <person name="Coppieters J."/>
            <person name="Dehais P."/>
            <person name="Villarroel R."/>
            <person name="Rouze P."/>
            <person name="van Montagu M."/>
        </authorList>
    </citation>
    <scope>NUCLEOTIDE SEQUENCE [GENOMIC DNA]</scope>
    <source>
        <strain>cv. Columbia</strain>
    </source>
</reference>
<reference key="3">
    <citation type="journal article" date="2000" name="Nature">
        <title>Sequence and analysis of chromosome 1 of the plant Arabidopsis thaliana.</title>
        <authorList>
            <person name="Theologis A."/>
            <person name="Ecker J.R."/>
            <person name="Palm C.J."/>
            <person name="Federspiel N.A."/>
            <person name="Kaul S."/>
            <person name="White O."/>
            <person name="Alonso J."/>
            <person name="Altafi H."/>
            <person name="Araujo R."/>
            <person name="Bowman C.L."/>
            <person name="Brooks S.Y."/>
            <person name="Buehler E."/>
            <person name="Chan A."/>
            <person name="Chao Q."/>
            <person name="Chen H."/>
            <person name="Cheuk R.F."/>
            <person name="Chin C.W."/>
            <person name="Chung M.K."/>
            <person name="Conn L."/>
            <person name="Conway A.B."/>
            <person name="Conway A.R."/>
            <person name="Creasy T.H."/>
            <person name="Dewar K."/>
            <person name="Dunn P."/>
            <person name="Etgu P."/>
            <person name="Feldblyum T.V."/>
            <person name="Feng J.-D."/>
            <person name="Fong B."/>
            <person name="Fujii C.Y."/>
            <person name="Gill J.E."/>
            <person name="Goldsmith A.D."/>
            <person name="Haas B."/>
            <person name="Hansen N.F."/>
            <person name="Hughes B."/>
            <person name="Huizar L."/>
            <person name="Hunter J.L."/>
            <person name="Jenkins J."/>
            <person name="Johnson-Hopson C."/>
            <person name="Khan S."/>
            <person name="Khaykin E."/>
            <person name="Kim C.J."/>
            <person name="Koo H.L."/>
            <person name="Kremenetskaia I."/>
            <person name="Kurtz D.B."/>
            <person name="Kwan A."/>
            <person name="Lam B."/>
            <person name="Langin-Hooper S."/>
            <person name="Lee A."/>
            <person name="Lee J.M."/>
            <person name="Lenz C.A."/>
            <person name="Li J.H."/>
            <person name="Li Y.-P."/>
            <person name="Lin X."/>
            <person name="Liu S.X."/>
            <person name="Liu Z.A."/>
            <person name="Luros J.S."/>
            <person name="Maiti R."/>
            <person name="Marziali A."/>
            <person name="Militscher J."/>
            <person name="Miranda M."/>
            <person name="Nguyen M."/>
            <person name="Nierman W.C."/>
            <person name="Osborne B.I."/>
            <person name="Pai G."/>
            <person name="Peterson J."/>
            <person name="Pham P.K."/>
            <person name="Rizzo M."/>
            <person name="Rooney T."/>
            <person name="Rowley D."/>
            <person name="Sakano H."/>
            <person name="Salzberg S.L."/>
            <person name="Schwartz J.R."/>
            <person name="Shinn P."/>
            <person name="Southwick A.M."/>
            <person name="Sun H."/>
            <person name="Tallon L.J."/>
            <person name="Tambunga G."/>
            <person name="Toriumi M.J."/>
            <person name="Town C.D."/>
            <person name="Utterback T."/>
            <person name="Van Aken S."/>
            <person name="Vaysberg M."/>
            <person name="Vysotskaia V.S."/>
            <person name="Walker M."/>
            <person name="Wu D."/>
            <person name="Yu G."/>
            <person name="Fraser C.M."/>
            <person name="Venter J.C."/>
            <person name="Davis R.W."/>
        </authorList>
    </citation>
    <scope>NUCLEOTIDE SEQUENCE [LARGE SCALE GENOMIC DNA]</scope>
    <source>
        <strain>cv. Columbia</strain>
    </source>
</reference>
<reference key="4">
    <citation type="journal article" date="2017" name="Plant J.">
        <title>Araport11: a complete reannotation of the Arabidopsis thaliana reference genome.</title>
        <authorList>
            <person name="Cheng C.Y."/>
            <person name="Krishnakumar V."/>
            <person name="Chan A.P."/>
            <person name="Thibaud-Nissen F."/>
            <person name="Schobel S."/>
            <person name="Town C.D."/>
        </authorList>
    </citation>
    <scope>GENOME REANNOTATION</scope>
    <source>
        <strain>cv. Columbia</strain>
    </source>
</reference>
<reference key="5">
    <citation type="journal article" date="2003" name="Science">
        <title>Empirical analysis of transcriptional activity in the Arabidopsis genome.</title>
        <authorList>
            <person name="Yamada K."/>
            <person name="Lim J."/>
            <person name="Dale J.M."/>
            <person name="Chen H."/>
            <person name="Shinn P."/>
            <person name="Palm C.J."/>
            <person name="Southwick A.M."/>
            <person name="Wu H.C."/>
            <person name="Kim C.J."/>
            <person name="Nguyen M."/>
            <person name="Pham P.K."/>
            <person name="Cheuk R.F."/>
            <person name="Karlin-Newmann G."/>
            <person name="Liu S.X."/>
            <person name="Lam B."/>
            <person name="Sakano H."/>
            <person name="Wu T."/>
            <person name="Yu G."/>
            <person name="Miranda M."/>
            <person name="Quach H.L."/>
            <person name="Tripp M."/>
            <person name="Chang C.H."/>
            <person name="Lee J.M."/>
            <person name="Toriumi M.J."/>
            <person name="Chan M.M."/>
            <person name="Tang C.C."/>
            <person name="Onodera C.S."/>
            <person name="Deng J.M."/>
            <person name="Akiyama K."/>
            <person name="Ansari Y."/>
            <person name="Arakawa T."/>
            <person name="Banh J."/>
            <person name="Banno F."/>
            <person name="Bowser L."/>
            <person name="Brooks S.Y."/>
            <person name="Carninci P."/>
            <person name="Chao Q."/>
            <person name="Choy N."/>
            <person name="Enju A."/>
            <person name="Goldsmith A.D."/>
            <person name="Gurjal M."/>
            <person name="Hansen N.F."/>
            <person name="Hayashizaki Y."/>
            <person name="Johnson-Hopson C."/>
            <person name="Hsuan V.W."/>
            <person name="Iida K."/>
            <person name="Karnes M."/>
            <person name="Khan S."/>
            <person name="Koesema E."/>
            <person name="Ishida J."/>
            <person name="Jiang P.X."/>
            <person name="Jones T."/>
            <person name="Kawai J."/>
            <person name="Kamiya A."/>
            <person name="Meyers C."/>
            <person name="Nakajima M."/>
            <person name="Narusaka M."/>
            <person name="Seki M."/>
            <person name="Sakurai T."/>
            <person name="Satou M."/>
            <person name="Tamse R."/>
            <person name="Vaysberg M."/>
            <person name="Wallender E.K."/>
            <person name="Wong C."/>
            <person name="Yamamura Y."/>
            <person name="Yuan S."/>
            <person name="Shinozaki K."/>
            <person name="Davis R.W."/>
            <person name="Theologis A."/>
            <person name="Ecker J.R."/>
        </authorList>
    </citation>
    <scope>NUCLEOTIDE SEQUENCE [LARGE SCALE MRNA]</scope>
    <source>
        <strain>cv. Columbia</strain>
    </source>
</reference>
<reference key="6">
    <citation type="journal article" date="1996" name="Development">
        <title>Two independent and polarized processes of cell elongation regulate leaf blade expansion in Arabidopsis thaliana (L.) Heynh.</title>
        <authorList>
            <person name="Tsuge T."/>
            <person name="Tsukaya H."/>
            <person name="Uchimiya H."/>
        </authorList>
    </citation>
    <scope>FUNCTION</scope>
    <scope>DISRUPTION PHENOTYPE</scope>
    <source>
        <strain>cv. Columbia</strain>
    </source>
</reference>
<reference key="7">
    <citation type="journal article" date="1998" name="Planta">
        <title>The CURLY LEAF gene controls both division and elongation of cells during the expansion of the leaf blade in Arabidopsis thaliana.</title>
        <authorList>
            <person name="Kim G.-T."/>
            <person name="Tsukaya H."/>
            <person name="Uchimiya H."/>
        </authorList>
    </citation>
    <scope>FUNCTION</scope>
    <scope>DISRUPTION PHENOTYPE</scope>
</reference>
<reference key="8">
    <citation type="journal article" date="1999" name="Development">
        <title>Genetic control of trichome branch number in Arabidopsis: the roles of the FURCA loci.</title>
        <authorList>
            <person name="Luo D."/>
            <person name="Oppenheimer D.G."/>
        </authorList>
    </citation>
    <scope>FUNCTION IN TRICHOME BRANCHING</scope>
    <scope>DISRUPTION PHENOTYPE</scope>
    <source>
        <strain>cv. RLD</strain>
    </source>
</reference>
<reference key="9">
    <citation type="journal article" date="2002" name="Philos. Trans. R. Soc. Lond., B, Biol. Sci.">
        <title>Trichome morphogenesis: a cell-cycle perspective.</title>
        <authorList>
            <person name="Schnittger A."/>
            <person name="Huelskamp M."/>
        </authorList>
    </citation>
    <scope>FUNCTION IN TRICHOME BRANCHING</scope>
    <scope>DISRUPTION PHENOTYPE</scope>
</reference>
<reference key="10">
    <citation type="journal article" date="2002" name="EMBO J.">
        <title>The cell morphogenesis gene ANGUSTIFOLIA encodes a CtBP/BARS-like protein and is involved in the control of the microtubule cytoskeleton.</title>
        <authorList>
            <person name="Folkers U."/>
            <person name="Kirik V."/>
            <person name="Schoebinger U."/>
            <person name="Falk S."/>
            <person name="Krishnakumar S."/>
            <person name="Pollock M.A."/>
            <person name="Oppenheimer D.G."/>
            <person name="Day I."/>
            <person name="Reddy A.S."/>
            <person name="Juergens G."/>
            <person name="Huelskamp M."/>
            <person name="Reddy A.R."/>
        </authorList>
    </citation>
    <scope>TISSUE SPECIFICITY</scope>
    <scope>SUBCELLULAR LOCATION</scope>
    <scope>MUTAGENESIS OF GLU-118</scope>
    <scope>INTERACTION WITH KCBP</scope>
</reference>
<reference key="11">
    <citation type="journal article" date="2002" name="Plant Cell Physiol.">
        <title>The leaf index: heteroblasty, natural variation, and the genetic control of polar processes of leaf expansion.</title>
        <authorList>
            <person name="Tsukaya H."/>
        </authorList>
    </citation>
    <scope>REVIEW</scope>
</reference>
<reference key="12">
    <citation type="journal article" date="2007" name="Dev. Genes Evol.">
        <title>Structurally related Arabidopsis ANGUSTIFOLIA is functionally distinct from the transcriptional corepressor CtBP.</title>
        <authorList>
            <person name="Stern M.D."/>
            <person name="Aihara H."/>
            <person name="Cho K.-H."/>
            <person name="Kim G.-T."/>
            <person name="Horiguchi G."/>
            <person name="Roccaro G.A."/>
            <person name="Guevara E."/>
            <person name="Sun H.H."/>
            <person name="Negeri D."/>
            <person name="Tsukaya H."/>
            <person name="Nibu Y."/>
        </authorList>
    </citation>
    <scope>FUNCTION</scope>
</reference>
<reference key="13">
    <citation type="journal article" date="2010" name="Plant J.">
        <title>Tissue layer specific regulation of leaf length and width in Arabidopsis as revealed by the cell autonomous action of ANGUSTIFOLIA.</title>
        <authorList>
            <person name="Bai Y."/>
            <person name="Falk S."/>
            <person name="Schnittger A."/>
            <person name="Jakoby M.J."/>
            <person name="Huelskamp M."/>
        </authorList>
    </citation>
    <scope>FUNCTION</scope>
    <scope>DISRUPTION PHENOTYPE</scope>
</reference>
<reference key="14">
    <citation type="journal article" date="2011" name="Plant J.">
        <title>ANGUSTIFOLIA, a plant homolog of CtBP/BARS, functions outside the nucleus.</title>
        <authorList>
            <person name="Minamisawa N."/>
            <person name="Sato M."/>
            <person name="Cho K.H."/>
            <person name="Ueno H."/>
            <person name="Takechi K."/>
            <person name="Kajikawa M."/>
            <person name="Yamato K.T."/>
            <person name="Ohyama K."/>
            <person name="Toyooka K."/>
            <person name="Kim G.T."/>
            <person name="Horiguchi G."/>
            <person name="Takano H."/>
            <person name="Ueda T."/>
            <person name="Tsukaya H."/>
        </authorList>
    </citation>
    <scope>SUBCELLULAR LOCATION</scope>
    <scope>SUBUNIT</scope>
    <scope>DOMAIN</scope>
    <scope>MUTAGENESIS OF 26-LEU--GLU-30; 424-LYS--HIS-427 AND SER-456</scope>
    <scope>TISSUE SPECIFICITY</scope>
</reference>
<reference key="15">
    <citation type="journal article" date="2013" name="BMC Plant Biol.">
        <title>ANGUSTIFOLIA is a central component of tissue morphogenesis mediated by the atypical receptor-like kinase STRUBBELIG.</title>
        <authorList>
            <person name="Bai Y."/>
            <person name="Vaddepalli P."/>
            <person name="Fulton L."/>
            <person name="Bhasin H."/>
            <person name="Hulskamp M."/>
            <person name="Schneitz K."/>
        </authorList>
    </citation>
    <scope>FUNCTION</scope>
    <scope>DISRUPTION PHENOTYPE</scope>
    <scope>MUTAGENESIS OF GLY-170</scope>
    <scope>INTERACTION WITH SUB</scope>
</reference>
<reference key="16">
    <citation type="journal article" date="2013" name="BMC Plant Biol.">
        <title>The cell morphogenesis ANGUSTIFOLIA (AN) gene, a plant homolog of CtBP/BARS, is involved in abiotic and biotic stress response in higher plants.</title>
        <authorList>
            <person name="Gachomo E.W."/>
            <person name="Jimenez-Lopez J.C."/>
            <person name="Smith S.R."/>
            <person name="Cooksey A.B."/>
            <person name="Oghoghomeh O.M."/>
            <person name="Johnson N."/>
            <person name="Baba-Moussa L."/>
            <person name="Kotchoni S.O."/>
        </authorList>
    </citation>
    <scope>FUNCTION</scope>
    <scope>DISRUPTION PHENOTYPE</scope>
</reference>
<reference key="17">
    <citation type="journal article" date="2020" name="Cell">
        <title>DIX domain polymerization drives assembly of plant cell polarity complexes.</title>
        <authorList>
            <person name="van Dop M."/>
            <person name="Fiedler M."/>
            <person name="Mutte S."/>
            <person name="de Keijzer J."/>
            <person name="Olijslager L."/>
            <person name="Albrecht C."/>
            <person name="Liao C.Y."/>
            <person name="Janson M.E."/>
            <person name="Bienz M."/>
            <person name="Weijers D."/>
        </authorList>
    </citation>
    <scope>DISRUPTION PHENOTYPE</scope>
    <scope>SUBCELLULAR LOCATION</scope>
    <scope>INTERACTION WITH SOK1; SOK2; SOK3 AND SOK4</scope>
</reference>
<reference key="18">
    <citation type="journal article" date="2022" name="New Phytol.">
        <title>The IPGA1-ANGUSTIFOLIA module regulates microtubule organisation and pavement cell shape in Arabidopsis.</title>
        <authorList>
            <person name="Chen B."/>
            <person name="Dang X."/>
            <person name="Bai W."/>
            <person name="Liu M."/>
            <person name="Li Y."/>
            <person name="Zhu L."/>
            <person name="Yang Y."/>
            <person name="Yu P."/>
            <person name="Ren H."/>
            <person name="Huang D."/>
            <person name="Pan X."/>
            <person name="Wang H."/>
            <person name="Qin Y."/>
            <person name="Feng S."/>
            <person name="Wang Q."/>
            <person name="Lin D."/>
        </authorList>
    </citation>
    <scope>FUNCTION</scope>
    <scope>DISRUPTION PHENOTYPE</scope>
    <scope>INTERACTION WITH IPGA1</scope>
    <scope>SUBCELLULAR LOCATION</scope>
    <source>
        <strain>cv. Columbia</strain>
    </source>
</reference>
<dbReference type="EMBL" id="AB032060">
    <property type="protein sequence ID" value="BAB64262.1"/>
    <property type="molecule type" value="mRNA"/>
</dbReference>
<dbReference type="EMBL" id="Y10086">
    <property type="protein sequence ID" value="CAA71175.1"/>
    <property type="status" value="ALT_INIT"/>
    <property type="molecule type" value="Genomic_DNA"/>
</dbReference>
<dbReference type="EMBL" id="Y12776">
    <property type="protein sequence ID" value="CAA73306.1"/>
    <property type="molecule type" value="Genomic_DNA"/>
</dbReference>
<dbReference type="EMBL" id="Y12776">
    <property type="protein sequence ID" value="CAA73307.1"/>
    <property type="status" value="ALT_INIT"/>
    <property type="molecule type" value="Genomic_DNA"/>
</dbReference>
<dbReference type="EMBL" id="AC061957">
    <property type="protein sequence ID" value="AAF81310.1"/>
    <property type="status" value="ALT_SEQ"/>
    <property type="molecule type" value="Genomic_DNA"/>
</dbReference>
<dbReference type="EMBL" id="CP002684">
    <property type="protein sequence ID" value="AEE27298.1"/>
    <property type="molecule type" value="Genomic_DNA"/>
</dbReference>
<dbReference type="EMBL" id="AY059829">
    <property type="protein sequence ID" value="AAL24311.1"/>
    <property type="molecule type" value="mRNA"/>
</dbReference>
<dbReference type="EMBL" id="BT000155">
    <property type="protein sequence ID" value="AAN15474.1"/>
    <property type="molecule type" value="mRNA"/>
</dbReference>
<dbReference type="PIR" id="G86145">
    <property type="entry name" value="G86145"/>
</dbReference>
<dbReference type="RefSeq" id="NP_563629.1">
    <property type="nucleotide sequence ID" value="NM_100033.3"/>
</dbReference>
<dbReference type="SMR" id="O23702"/>
<dbReference type="BioGRID" id="24636">
    <property type="interactions" value="8"/>
</dbReference>
<dbReference type="FunCoup" id="O23702">
    <property type="interactions" value="1489"/>
</dbReference>
<dbReference type="IntAct" id="O23702">
    <property type="interactions" value="4"/>
</dbReference>
<dbReference type="STRING" id="3702.O23702"/>
<dbReference type="iPTMnet" id="O23702"/>
<dbReference type="PaxDb" id="3702-AT1G01510.1"/>
<dbReference type="ProteomicsDB" id="222722"/>
<dbReference type="EnsemblPlants" id="AT1G01510.1">
    <property type="protein sequence ID" value="AT1G01510.1"/>
    <property type="gene ID" value="AT1G01510"/>
</dbReference>
<dbReference type="GeneID" id="839401"/>
<dbReference type="Gramene" id="AT1G01510.1">
    <property type="protein sequence ID" value="AT1G01510.1"/>
    <property type="gene ID" value="AT1G01510"/>
</dbReference>
<dbReference type="KEGG" id="ath:AT1G01510"/>
<dbReference type="Araport" id="AT1G01510"/>
<dbReference type="TAIR" id="AT1G01510">
    <property type="gene designation" value="AN"/>
</dbReference>
<dbReference type="eggNOG" id="KOG0067">
    <property type="taxonomic scope" value="Eukaryota"/>
</dbReference>
<dbReference type="HOGENOM" id="CLU_013739_0_0_1"/>
<dbReference type="InParanoid" id="O23702"/>
<dbReference type="OMA" id="NCIEDCS"/>
<dbReference type="OrthoDB" id="9991913at2759"/>
<dbReference type="PhylomeDB" id="O23702"/>
<dbReference type="PRO" id="PR:O23702"/>
<dbReference type="Proteomes" id="UP000006548">
    <property type="component" value="Chromosome 1"/>
</dbReference>
<dbReference type="ExpressionAtlas" id="O23702">
    <property type="expression patterns" value="baseline and differential"/>
</dbReference>
<dbReference type="GO" id="GO:0010494">
    <property type="term" value="C:cytoplasmic stress granule"/>
    <property type="evidence" value="ECO:0000314"/>
    <property type="project" value="TAIR"/>
</dbReference>
<dbReference type="GO" id="GO:0005829">
    <property type="term" value="C:cytosol"/>
    <property type="evidence" value="ECO:0000314"/>
    <property type="project" value="TAIR"/>
</dbReference>
<dbReference type="GO" id="GO:0005874">
    <property type="term" value="C:microtubule"/>
    <property type="evidence" value="ECO:0000314"/>
    <property type="project" value="UniProtKB"/>
</dbReference>
<dbReference type="GO" id="GO:0005802">
    <property type="term" value="C:trans-Golgi network"/>
    <property type="evidence" value="ECO:0000314"/>
    <property type="project" value="TAIR"/>
</dbReference>
<dbReference type="GO" id="GO:0042802">
    <property type="term" value="F:identical protein binding"/>
    <property type="evidence" value="ECO:0000353"/>
    <property type="project" value="IntAct"/>
</dbReference>
<dbReference type="GO" id="GO:0019900">
    <property type="term" value="F:kinase binding"/>
    <property type="evidence" value="ECO:0000353"/>
    <property type="project" value="TAIR"/>
</dbReference>
<dbReference type="GO" id="GO:0051287">
    <property type="term" value="F:NAD binding"/>
    <property type="evidence" value="ECO:0007669"/>
    <property type="project" value="InterPro"/>
</dbReference>
<dbReference type="GO" id="GO:0016616">
    <property type="term" value="F:oxidoreductase activity, acting on the CH-OH group of donors, NAD or NADP as acceptor"/>
    <property type="evidence" value="ECO:0007669"/>
    <property type="project" value="InterPro"/>
</dbReference>
<dbReference type="GO" id="GO:0042803">
    <property type="term" value="F:protein homodimerization activity"/>
    <property type="evidence" value="ECO:0000314"/>
    <property type="project" value="UniProtKB"/>
</dbReference>
<dbReference type="GO" id="GO:0003714">
    <property type="term" value="F:transcription corepressor activity"/>
    <property type="evidence" value="ECO:0007669"/>
    <property type="project" value="InterPro"/>
</dbReference>
<dbReference type="GO" id="GO:0048826">
    <property type="term" value="P:cotyledon morphogenesis"/>
    <property type="evidence" value="ECO:0000315"/>
    <property type="project" value="UniProtKB"/>
</dbReference>
<dbReference type="GO" id="GO:0048444">
    <property type="term" value="P:floral organ morphogenesis"/>
    <property type="evidence" value="ECO:0000315"/>
    <property type="project" value="UniProtKB"/>
</dbReference>
<dbReference type="GO" id="GO:0048530">
    <property type="term" value="P:fruit morphogenesis"/>
    <property type="evidence" value="ECO:0000315"/>
    <property type="project" value="UniProtKB"/>
</dbReference>
<dbReference type="GO" id="GO:0031129">
    <property type="term" value="P:inductive cell-cell signaling"/>
    <property type="evidence" value="ECO:0000315"/>
    <property type="project" value="UniProtKB"/>
</dbReference>
<dbReference type="GO" id="GO:0009965">
    <property type="term" value="P:leaf morphogenesis"/>
    <property type="evidence" value="ECO:0000315"/>
    <property type="project" value="TAIR"/>
</dbReference>
<dbReference type="GO" id="GO:0000226">
    <property type="term" value="P:microtubule cytoskeleton organization"/>
    <property type="evidence" value="ECO:0000315"/>
    <property type="project" value="TAIR"/>
</dbReference>
<dbReference type="GO" id="GO:0042814">
    <property type="term" value="P:monopolar cell growth"/>
    <property type="evidence" value="ECO:0000315"/>
    <property type="project" value="TAIR"/>
</dbReference>
<dbReference type="GO" id="GO:0007097">
    <property type="term" value="P:nuclear migration"/>
    <property type="evidence" value="ECO:0000315"/>
    <property type="project" value="TAIR"/>
</dbReference>
<dbReference type="GO" id="GO:0008360">
    <property type="term" value="P:regulation of cell shape"/>
    <property type="evidence" value="ECO:0000315"/>
    <property type="project" value="UniProtKB"/>
</dbReference>
<dbReference type="GO" id="GO:0045604">
    <property type="term" value="P:regulation of epidermal cell differentiation"/>
    <property type="evidence" value="ECO:0000315"/>
    <property type="project" value="UniProtKB"/>
</dbReference>
<dbReference type="GO" id="GO:0010482">
    <property type="term" value="P:regulation of epidermal cell division"/>
    <property type="evidence" value="ECO:0000315"/>
    <property type="project" value="UniProtKB"/>
</dbReference>
<dbReference type="GO" id="GO:2000039">
    <property type="term" value="P:regulation of trichome morphogenesis"/>
    <property type="evidence" value="ECO:0000315"/>
    <property type="project" value="UniProtKB"/>
</dbReference>
<dbReference type="GO" id="GO:0006970">
    <property type="term" value="P:response to osmotic stress"/>
    <property type="evidence" value="ECO:0000315"/>
    <property type="project" value="TAIR"/>
</dbReference>
<dbReference type="GO" id="GO:0009651">
    <property type="term" value="P:response to salt stress"/>
    <property type="evidence" value="ECO:0000315"/>
    <property type="project" value="TAIR"/>
</dbReference>
<dbReference type="GO" id="GO:0034063">
    <property type="term" value="P:stress granule assembly"/>
    <property type="evidence" value="ECO:0000315"/>
    <property type="project" value="TAIR"/>
</dbReference>
<dbReference type="GO" id="GO:0010091">
    <property type="term" value="P:trichome branching"/>
    <property type="evidence" value="ECO:0000315"/>
    <property type="project" value="UniProtKB"/>
</dbReference>
<dbReference type="CDD" id="cd05299">
    <property type="entry name" value="CtBP_dh"/>
    <property type="match status" value="1"/>
</dbReference>
<dbReference type="Gene3D" id="3.40.50.720">
    <property type="entry name" value="NAD(P)-binding Rossmann-like Domain"/>
    <property type="match status" value="2"/>
</dbReference>
<dbReference type="InterPro" id="IPR045015">
    <property type="entry name" value="AN-like"/>
</dbReference>
<dbReference type="InterPro" id="IPR043322">
    <property type="entry name" value="CtBP"/>
</dbReference>
<dbReference type="InterPro" id="IPR006140">
    <property type="entry name" value="D-isomer_DH_NAD-bd"/>
</dbReference>
<dbReference type="InterPro" id="IPR036291">
    <property type="entry name" value="NAD(P)-bd_dom_sf"/>
</dbReference>
<dbReference type="PANTHER" id="PTHR43254:SF3">
    <property type="entry name" value="C-TERMINAL BINDING PROTEIN AN"/>
    <property type="match status" value="1"/>
</dbReference>
<dbReference type="PANTHER" id="PTHR43254">
    <property type="entry name" value="C-TERMINAL BINDING PROTEIN AN-RELATED"/>
    <property type="match status" value="1"/>
</dbReference>
<dbReference type="Pfam" id="PF02826">
    <property type="entry name" value="2-Hacid_dh_C"/>
    <property type="match status" value="1"/>
</dbReference>
<dbReference type="SUPFAM" id="SSF52283">
    <property type="entry name" value="Formate/glycerate dehydrogenase catalytic domain-like"/>
    <property type="match status" value="1"/>
</dbReference>
<dbReference type="SUPFAM" id="SSF51735">
    <property type="entry name" value="NAD(P)-binding Rossmann-fold domains"/>
    <property type="match status" value="1"/>
</dbReference>